<accession>Q9JJR7</accession>
<accession>Q3SXE3</accession>
<feature type="chain" id="PRO_0000127134" description="Achaete-scute homolog 3">
    <location>
        <begin position="1"/>
        <end position="174"/>
    </location>
</feature>
<feature type="domain" description="bHLH" evidence="1">
    <location>
        <begin position="92"/>
        <end position="144"/>
    </location>
</feature>
<feature type="region of interest" description="Basic motif" evidence="1">
    <location>
        <begin position="92"/>
        <end position="105"/>
    </location>
</feature>
<feature type="region of interest" description="Helix-loop-helix motif" evidence="1">
    <location>
        <begin position="106"/>
        <end position="144"/>
    </location>
</feature>
<feature type="region of interest" description="Disordered" evidence="2">
    <location>
        <begin position="153"/>
        <end position="174"/>
    </location>
</feature>
<reference key="1">
    <citation type="submission" date="2000-04" db="EMBL/GenBank/DDBJ databases">
        <title>MASH3 a novel basic helix-loop-helix protein that inhibits myogenesis in C2C12 cells.</title>
        <authorList>
            <person name="Kemp P.R."/>
            <person name="Cooper W.N."/>
            <person name="Metcalfe J.C."/>
        </authorList>
    </citation>
    <scope>NUCLEOTIDE SEQUENCE [MRNA]</scope>
</reference>
<reference key="2">
    <citation type="journal article" date="2001" name="Dev. Biol.">
        <title>Sgn1, a basic helix-loop-helix transcription factor delineates the salivary gland duct cell lineage in mice.</title>
        <authorList>
            <person name="Yoshida S."/>
            <person name="Ohbo K."/>
            <person name="Takakura A."/>
            <person name="Takebayashi H."/>
            <person name="Okada T."/>
            <person name="Abe K."/>
            <person name="Nabeshima Y."/>
        </authorList>
    </citation>
    <scope>NUCLEOTIDE SEQUENCE [MRNA]</scope>
    <scope>FUNCTION</scope>
    <scope>TISSUE SPECIFICITY</scope>
    <source>
        <strain>C57BL/6J</strain>
    </source>
</reference>
<reference key="3">
    <citation type="journal article" date="2001" name="Cytogenet. Cell Genet.">
        <title>Comparative genomic sequencing reveals a strikingly similar architecture of a conserved syntenic region on human chromosome 11p15.3 (including gene ST5) and mouse chromosome 7.</title>
        <authorList>
            <person name="Amid C."/>
            <person name="Bahr A."/>
            <person name="Mujica A."/>
            <person name="Sampson N."/>
            <person name="Bikar S.E."/>
            <person name="Winterpacht A."/>
            <person name="Zabel B."/>
            <person name="Hankeln T."/>
            <person name="Schmidt E.R."/>
        </authorList>
    </citation>
    <scope>NUCLEOTIDE SEQUENCE [GENOMIC DNA]</scope>
</reference>
<reference key="4">
    <citation type="journal article" date="2004" name="Genome Res.">
        <title>The status, quality, and expansion of the NIH full-length cDNA project: the Mammalian Gene Collection (MGC).</title>
        <authorList>
            <consortium name="The MGC Project Team"/>
        </authorList>
    </citation>
    <scope>NUCLEOTIDE SEQUENCE [LARGE SCALE MRNA]</scope>
</reference>
<reference key="5">
    <citation type="journal article" date="2008" name="Dev. Biol.">
        <title>Ascl3 expression marks a progenitor population of both acinar and ductal cells in mouse salivary glands.</title>
        <authorList>
            <person name="Bullard T."/>
            <person name="Koek L."/>
            <person name="Roztocil E."/>
            <person name="Kingsley P.D."/>
            <person name="Mirels L."/>
            <person name="Ovitt C.E."/>
        </authorList>
    </citation>
    <scope>FUNCTION</scope>
    <scope>TISSUE SPECIFICITY</scope>
    <scope>DEVELOPMENTAL STAGE</scope>
</reference>
<reference key="6">
    <citation type="journal article" date="2011" name="Dev. Biol.">
        <title>Ascl3 knockout and cell ablation models reveal complexity of salivary gland maintenance and regeneration.</title>
        <authorList>
            <person name="Arany S."/>
            <person name="Catalan M.A."/>
            <person name="Roztocil E."/>
            <person name="Ovitt C.E."/>
        </authorList>
    </citation>
    <scope>FUNCTION</scope>
    <scope>DISRUPTION PHENOTYPE</scope>
</reference>
<reference key="7">
    <citation type="journal article" date="2016" name="Sci. Rep.">
        <title>Ascl3 transcription factor marks a distinct progenitor lineage for non-neuronal support cells in the olfactory epithelium.</title>
        <authorList>
            <person name="Weng P.L."/>
            <person name="Vinjamuri M."/>
            <person name="Ovitt C.E."/>
        </authorList>
    </citation>
    <scope>FUNCTION</scope>
    <scope>TISSUE SPECIFICITY</scope>
    <scope>DEVELOPMENTAL STAGE</scope>
    <scope>INDUCTION</scope>
    <scope>DISRUPTION PHENOTYPE</scope>
</reference>
<dbReference type="EMBL" id="AJ277605">
    <property type="protein sequence ID" value="CAC37689.1"/>
    <property type="molecule type" value="mRNA"/>
</dbReference>
<dbReference type="EMBL" id="AB046448">
    <property type="protein sequence ID" value="BAB83911.1"/>
    <property type="molecule type" value="mRNA"/>
</dbReference>
<dbReference type="EMBL" id="AJ400878">
    <property type="protein sequence ID" value="CAB92296.1"/>
    <property type="molecule type" value="Genomic_DNA"/>
</dbReference>
<dbReference type="EMBL" id="BC104346">
    <property type="protein sequence ID" value="AAI04347.1"/>
    <property type="molecule type" value="mRNA"/>
</dbReference>
<dbReference type="EMBL" id="BC104347">
    <property type="protein sequence ID" value="AAI04348.1"/>
    <property type="molecule type" value="mRNA"/>
</dbReference>
<dbReference type="CCDS" id="CCDS21737.1"/>
<dbReference type="RefSeq" id="NP_064435.1">
    <property type="nucleotide sequence ID" value="NM_020051.1"/>
</dbReference>
<dbReference type="SMR" id="Q9JJR7"/>
<dbReference type="BioGRID" id="208173">
    <property type="interactions" value="5"/>
</dbReference>
<dbReference type="FunCoup" id="Q9JJR7">
    <property type="interactions" value="219"/>
</dbReference>
<dbReference type="STRING" id="10090.ENSMUSP00000037702"/>
<dbReference type="PhosphoSitePlus" id="Q9JJR7"/>
<dbReference type="PaxDb" id="10090-ENSMUSP00000037702"/>
<dbReference type="Antibodypedia" id="24178">
    <property type="antibodies" value="89 antibodies from 23 providers"/>
</dbReference>
<dbReference type="DNASU" id="56787"/>
<dbReference type="Ensembl" id="ENSMUST00000035372.3">
    <property type="protein sequence ID" value="ENSMUSP00000037702.2"/>
    <property type="gene ID" value="ENSMUSG00000035951.3"/>
</dbReference>
<dbReference type="GeneID" id="56787"/>
<dbReference type="KEGG" id="mmu:56787"/>
<dbReference type="UCSC" id="uc009jeb.1">
    <property type="organism name" value="mouse"/>
</dbReference>
<dbReference type="AGR" id="MGI:1928820"/>
<dbReference type="CTD" id="56676"/>
<dbReference type="MGI" id="MGI:1928820">
    <property type="gene designation" value="Ascl3"/>
</dbReference>
<dbReference type="VEuPathDB" id="HostDB:ENSMUSG00000035951"/>
<dbReference type="eggNOG" id="KOG4029">
    <property type="taxonomic scope" value="Eukaryota"/>
</dbReference>
<dbReference type="GeneTree" id="ENSGT00940000162850"/>
<dbReference type="HOGENOM" id="CLU_128274_0_0_1"/>
<dbReference type="InParanoid" id="Q9JJR7"/>
<dbReference type="OMA" id="MMDNRSY"/>
<dbReference type="OrthoDB" id="6241467at2759"/>
<dbReference type="PhylomeDB" id="Q9JJR7"/>
<dbReference type="TreeFam" id="TF322889"/>
<dbReference type="BioGRID-ORCS" id="56787">
    <property type="hits" value="4 hits in 78 CRISPR screens"/>
</dbReference>
<dbReference type="ChiTaRS" id="Gps1">
    <property type="organism name" value="mouse"/>
</dbReference>
<dbReference type="PRO" id="PR:Q9JJR7"/>
<dbReference type="Proteomes" id="UP000000589">
    <property type="component" value="Chromosome 7"/>
</dbReference>
<dbReference type="RNAct" id="Q9JJR7">
    <property type="molecule type" value="protein"/>
</dbReference>
<dbReference type="Bgee" id="ENSMUSG00000035951">
    <property type="expression patterns" value="Expressed in olfactory epithelium and 23 other cell types or tissues"/>
</dbReference>
<dbReference type="GO" id="GO:0005634">
    <property type="term" value="C:nucleus"/>
    <property type="evidence" value="ECO:0000314"/>
    <property type="project" value="MGI"/>
</dbReference>
<dbReference type="GO" id="GO:0005667">
    <property type="term" value="C:transcription regulator complex"/>
    <property type="evidence" value="ECO:0000353"/>
    <property type="project" value="MGI"/>
</dbReference>
<dbReference type="GO" id="GO:0003677">
    <property type="term" value="F:DNA binding"/>
    <property type="evidence" value="ECO:0000314"/>
    <property type="project" value="MGI"/>
</dbReference>
<dbReference type="GO" id="GO:0001227">
    <property type="term" value="F:DNA-binding transcription repressor activity, RNA polymerase II-specific"/>
    <property type="evidence" value="ECO:0000314"/>
    <property type="project" value="NTNU_SB"/>
</dbReference>
<dbReference type="GO" id="GO:0046983">
    <property type="term" value="F:protein dimerization activity"/>
    <property type="evidence" value="ECO:0007669"/>
    <property type="project" value="InterPro"/>
</dbReference>
<dbReference type="GO" id="GO:0000977">
    <property type="term" value="F:RNA polymerase II transcription regulatory region sequence-specific DNA binding"/>
    <property type="evidence" value="ECO:0000314"/>
    <property type="project" value="NTNU_SB"/>
</dbReference>
<dbReference type="GO" id="GO:0060429">
    <property type="term" value="P:epithelium development"/>
    <property type="evidence" value="ECO:0000315"/>
    <property type="project" value="UniProtKB"/>
</dbReference>
<dbReference type="GO" id="GO:0000122">
    <property type="term" value="P:negative regulation of transcription by RNA polymerase II"/>
    <property type="evidence" value="ECO:0000314"/>
    <property type="project" value="NTNU_SB"/>
</dbReference>
<dbReference type="GO" id="GO:0006357">
    <property type="term" value="P:regulation of transcription by RNA polymerase II"/>
    <property type="evidence" value="ECO:0000314"/>
    <property type="project" value="MGI"/>
</dbReference>
<dbReference type="GO" id="GO:0007431">
    <property type="term" value="P:salivary gland development"/>
    <property type="evidence" value="ECO:0000315"/>
    <property type="project" value="UniProtKB"/>
</dbReference>
<dbReference type="GO" id="GO:0070654">
    <property type="term" value="P:sensory epithelium regeneration"/>
    <property type="evidence" value="ECO:0000315"/>
    <property type="project" value="UniProtKB"/>
</dbReference>
<dbReference type="GO" id="GO:0001894">
    <property type="term" value="P:tissue homeostasis"/>
    <property type="evidence" value="ECO:0000315"/>
    <property type="project" value="UniProtKB"/>
</dbReference>
<dbReference type="CDD" id="cd19745">
    <property type="entry name" value="bHLH_TS_ASCL3"/>
    <property type="match status" value="1"/>
</dbReference>
<dbReference type="FunFam" id="4.10.280.10:FF:000038">
    <property type="entry name" value="achaete-scute homolog 3"/>
    <property type="match status" value="1"/>
</dbReference>
<dbReference type="Gene3D" id="4.10.280.10">
    <property type="entry name" value="Helix-loop-helix DNA-binding domain"/>
    <property type="match status" value="1"/>
</dbReference>
<dbReference type="InterPro" id="IPR011598">
    <property type="entry name" value="bHLH_dom"/>
</dbReference>
<dbReference type="InterPro" id="IPR050283">
    <property type="entry name" value="E-box_TF_Regulators"/>
</dbReference>
<dbReference type="InterPro" id="IPR036638">
    <property type="entry name" value="HLH_DNA-bd_sf"/>
</dbReference>
<dbReference type="PANTHER" id="PTHR23349">
    <property type="entry name" value="BASIC HELIX-LOOP-HELIX TRANSCRIPTION FACTOR, TWIST"/>
    <property type="match status" value="1"/>
</dbReference>
<dbReference type="PANTHER" id="PTHR23349:SF108">
    <property type="entry name" value="BHLH DOMAIN-CONTAINING PROTEIN"/>
    <property type="match status" value="1"/>
</dbReference>
<dbReference type="Pfam" id="PF00010">
    <property type="entry name" value="HLH"/>
    <property type="match status" value="1"/>
</dbReference>
<dbReference type="SMART" id="SM00353">
    <property type="entry name" value="HLH"/>
    <property type="match status" value="1"/>
</dbReference>
<dbReference type="SUPFAM" id="SSF47459">
    <property type="entry name" value="HLH, helix-loop-helix DNA-binding domain"/>
    <property type="match status" value="1"/>
</dbReference>
<dbReference type="PROSITE" id="PS50888">
    <property type="entry name" value="BHLH"/>
    <property type="match status" value="1"/>
</dbReference>
<proteinExistence type="evidence at transcript level"/>
<name>ASCL3_MOUSE</name>
<gene>
    <name type="primary">Ascl3</name>
    <name type="synonym">Mash3</name>
    <name type="synonym">Sgn1</name>
</gene>
<keyword id="KW-0238">DNA-binding</keyword>
<keyword id="KW-0539">Nucleus</keyword>
<keyword id="KW-1185">Reference proteome</keyword>
<keyword id="KW-0678">Repressor</keyword>
<keyword id="KW-0804">Transcription</keyword>
<keyword id="KW-0805">Transcription regulation</keyword>
<organism>
    <name type="scientific">Mus musculus</name>
    <name type="common">Mouse</name>
    <dbReference type="NCBI Taxonomy" id="10090"/>
    <lineage>
        <taxon>Eukaryota</taxon>
        <taxon>Metazoa</taxon>
        <taxon>Chordata</taxon>
        <taxon>Craniata</taxon>
        <taxon>Vertebrata</taxon>
        <taxon>Euteleostomi</taxon>
        <taxon>Mammalia</taxon>
        <taxon>Eutheria</taxon>
        <taxon>Euarchontoglires</taxon>
        <taxon>Glires</taxon>
        <taxon>Rodentia</taxon>
        <taxon>Myomorpha</taxon>
        <taxon>Muroidea</taxon>
        <taxon>Muridae</taxon>
        <taxon>Murinae</taxon>
        <taxon>Mus</taxon>
        <taxon>Mus</taxon>
    </lineage>
</organism>
<comment type="function">
    <text evidence="3 4 5 6">Transcriptional repressor (PubMed:11784080). Inhibits myogenesis (PubMed:11784080). Plays a role in progenitor cells which differentiate into ductal and acinar, but not myoepithelial, cell lineages in the salivary glands (PubMed:18572159, PubMed:21377457). Involved in the functions of the microvillar cells and Bowman's glands and probably, in a non-cell-autonomous manner, in the development or regeneration of a complete olfactory epithelium (OE) (PubMed:27910949).</text>
</comment>
<comment type="subunit">
    <text evidence="3">Efficient DNA binding requires dimerization with another bHLH protein.</text>
</comment>
<comment type="subcellular location">
    <subcellularLocation>
        <location evidence="1">Nucleus</location>
    </subcellularLocation>
</comment>
<comment type="tissue specificity">
    <text evidence="3 4 6">Expressed in the salivary duct cells (PubMed:11784080, PubMed:18572159). Also expressed at lower levels in testis and epididymis (PubMed:11784080). Expressed in the olfactory epithelium (OE), in a subset of apical microvillar cells (PubMed:27910949).</text>
</comment>
<comment type="developmental stage">
    <text evidence="4 6">Expressed throughout embryonic development at 12.5, 14.5, 16.5 and 18.5 days post coitum (dpc), in cells localized at the apical region of the developing olfactory epithelium (OE) (PubMed:27910949). Expressed transiently in the progenitors of the secretory microvillar cells and Bowman's glands in the OE, expression being abolished by 2 months of age (PubMed:27910949). Also expressed at the canalicular stage, at 15.5 days post coitum (dpc), in the large excretory duct of the developing salivary glands (PubMed:18572159). By the terminal bud stage, just prior to birth, at 17.5 dpc, expressed in a small number of cells in ductal structures of all three major salivary glands (PubMed:18572159). At three weeks of age, expressed in duct cells in the submandibular, sublingual and parotid glands (PubMed:18572159).</text>
</comment>
<comment type="induction">
    <text evidence="6">Following injury of the olfactory epithelium (OE) in 3-4 week olds, up-regulated in the multipotent horizontal basal cells (HBCs) at between 1 and 28 days later.</text>
</comment>
<comment type="disruption phenotype">
    <text evidence="5 6">Viable and fertile (PubMed:21377457, PubMed:27910949). Salivary glands develop, but the submandibular glands are consistently smaller and overall levels of cell proliferation lower (PubMed:21377457). Expression of cation-chloride cotransporter Nkcc1 is dramatically reduced in salivary ducts (PubMed:21377457). No obvious morphological changes in the olfactory epithelium (OE) (PubMed:27910949).</text>
</comment>
<evidence type="ECO:0000255" key="1">
    <source>
        <dbReference type="PROSITE-ProRule" id="PRU00981"/>
    </source>
</evidence>
<evidence type="ECO:0000256" key="2">
    <source>
        <dbReference type="SAM" id="MobiDB-lite"/>
    </source>
</evidence>
<evidence type="ECO:0000269" key="3">
    <source>
    </source>
</evidence>
<evidence type="ECO:0000269" key="4">
    <source>
    </source>
</evidence>
<evidence type="ECO:0000269" key="5">
    <source>
    </source>
</evidence>
<evidence type="ECO:0000269" key="6">
    <source>
    </source>
</evidence>
<protein>
    <recommendedName>
        <fullName>Achaete-scute homolog 3</fullName>
        <shortName>ASH-3</shortName>
        <shortName>mASH-3</shortName>
        <shortName>mASH3</shortName>
    </recommendedName>
    <alternativeName>
        <fullName>bHLH transcriptional regulator Sgn-1</fullName>
    </alternativeName>
</protein>
<sequence>MDTRSYPSPPDRLSVFAESAHLPLSRPFYLDPMVTVHLCPETPVPASYTDELPLLPFSSDTLIMNNYGDPYPFPFPMPYTNYRRCDYTYGPAFIRKRNERERQRVKCVNEGYARLRRHLPEDYLEKRLSKVETLRAAIKYISYLQSLLYPDESETKKNPRTASCGSLDPALRVI</sequence>